<dbReference type="EMBL" id="L20896">
    <property type="protein sequence ID" value="AAA65540.1"/>
    <property type="molecule type" value="mRNA"/>
</dbReference>
<dbReference type="EMBL" id="L25872">
    <property type="protein sequence ID" value="AAA72047.1"/>
    <property type="molecule type" value="Genomic_DNA"/>
</dbReference>
<dbReference type="SMR" id="P51536"/>
<dbReference type="OrthoDB" id="5820458at2759"/>
<dbReference type="GO" id="GO:0005576">
    <property type="term" value="C:extracellular region"/>
    <property type="evidence" value="ECO:0007669"/>
    <property type="project" value="UniProtKB-SubCell"/>
</dbReference>
<dbReference type="GO" id="GO:0020037">
    <property type="term" value="F:heme binding"/>
    <property type="evidence" value="ECO:0007669"/>
    <property type="project" value="InterPro"/>
</dbReference>
<dbReference type="GO" id="GO:0005506">
    <property type="term" value="F:iron ion binding"/>
    <property type="evidence" value="ECO:0007669"/>
    <property type="project" value="InterPro"/>
</dbReference>
<dbReference type="GO" id="GO:0019825">
    <property type="term" value="F:oxygen binding"/>
    <property type="evidence" value="ECO:0007669"/>
    <property type="project" value="InterPro"/>
</dbReference>
<dbReference type="GO" id="GO:0005344">
    <property type="term" value="F:oxygen carrier activity"/>
    <property type="evidence" value="ECO:0007669"/>
    <property type="project" value="UniProtKB-KW"/>
</dbReference>
<dbReference type="CDD" id="cd01040">
    <property type="entry name" value="Mb-like"/>
    <property type="match status" value="1"/>
</dbReference>
<dbReference type="Gene3D" id="1.10.490.10">
    <property type="entry name" value="Globins"/>
    <property type="match status" value="1"/>
</dbReference>
<dbReference type="InterPro" id="IPR000971">
    <property type="entry name" value="Globin"/>
</dbReference>
<dbReference type="InterPro" id="IPR009050">
    <property type="entry name" value="Globin-like_sf"/>
</dbReference>
<dbReference type="InterPro" id="IPR012292">
    <property type="entry name" value="Globin/Proto"/>
</dbReference>
<dbReference type="InterPro" id="IPR012085">
    <property type="entry name" value="Globin_nematode"/>
</dbReference>
<dbReference type="InterPro" id="IPR044399">
    <property type="entry name" value="Mb-like_M"/>
</dbReference>
<dbReference type="Pfam" id="PF00042">
    <property type="entry name" value="Globin"/>
    <property type="match status" value="1"/>
</dbReference>
<dbReference type="PIRSF" id="PIRSF002026">
    <property type="entry name" value="Nematode_globin"/>
    <property type="match status" value="1"/>
</dbReference>
<dbReference type="SUPFAM" id="SSF46458">
    <property type="entry name" value="Globin-like"/>
    <property type="match status" value="1"/>
</dbReference>
<dbReference type="PROSITE" id="PS01033">
    <property type="entry name" value="GLOBIN"/>
    <property type="match status" value="1"/>
</dbReference>
<gene>
    <name type="primary">GLBC</name>
</gene>
<name>GLBC_NIPBR</name>
<organism>
    <name type="scientific">Nippostrongylus brasiliensis</name>
    <name type="common">Rat hookworm</name>
    <dbReference type="NCBI Taxonomy" id="27835"/>
    <lineage>
        <taxon>Eukaryota</taxon>
        <taxon>Metazoa</taxon>
        <taxon>Ecdysozoa</taxon>
        <taxon>Nematoda</taxon>
        <taxon>Chromadorea</taxon>
        <taxon>Rhabditida</taxon>
        <taxon>Rhabditina</taxon>
        <taxon>Rhabditomorpha</taxon>
        <taxon>Strongyloidea</taxon>
        <taxon>Heligmosomidae</taxon>
        <taxon>Nippostrongylus</taxon>
    </lineage>
</organism>
<sequence>MLWFVAVCFAIASVSAMSPADVKKHTVESMKAVPVGRDKAQNGIDFYKFFFTHHKDLRKFFKGAENFGADDVQKSKRFEKQGTALLLAVHVLANVYDNQAVFHGFVRELMNRHEKRGVDPKLWKIFFDDVWVPFLESKGAKLSGDAKAAWKELNKNFNSEAQHQLEKLGLPHA</sequence>
<proteinExistence type="evidence at protein level"/>
<evidence type="ECO:0000250" key="1"/>
<evidence type="ECO:0000255" key="2">
    <source>
        <dbReference type="PROSITE-ProRule" id="PRU00238"/>
    </source>
</evidence>
<feature type="signal peptide">
    <location>
        <begin position="1"/>
        <end position="16"/>
    </location>
</feature>
<feature type="chain" id="PRO_0000011186" description="Globin, cuticular isoform">
    <location>
        <begin position="17"/>
        <end position="173"/>
    </location>
</feature>
<feature type="domain" description="Globin" evidence="2">
    <location>
        <begin position="17"/>
        <end position="166"/>
    </location>
</feature>
<feature type="binding site" description="proximal binding residue" evidence="2">
    <location>
        <position position="113"/>
    </location>
    <ligand>
        <name>heme b</name>
        <dbReference type="ChEBI" id="CHEBI:60344"/>
    </ligand>
    <ligandPart>
        <name>Fe</name>
        <dbReference type="ChEBI" id="CHEBI:18248"/>
    </ligandPart>
</feature>
<keyword id="KW-0903">Direct protein sequencing</keyword>
<keyword id="KW-0349">Heme</keyword>
<keyword id="KW-0408">Iron</keyword>
<keyword id="KW-0479">Metal-binding</keyword>
<keyword id="KW-0561">Oxygen transport</keyword>
<keyword id="KW-0964">Secreted</keyword>
<keyword id="KW-0732">Signal</keyword>
<keyword id="KW-0813">Transport</keyword>
<reference key="1">
    <citation type="journal article" date="1994" name="Mol. Biochem. Parasitol.">
        <title>Sequence, expression and evolution of the globins of the parasitic nematode Nippostrongylus brasiliensis.</title>
        <authorList>
            <person name="Blaxter M.L."/>
            <person name="Ingram L."/>
            <person name="Tweedie S."/>
        </authorList>
    </citation>
    <scope>NUCLEOTIDE SEQUENCE [GENOMIC DNA / MRNA]</scope>
    <scope>PARTIAL PROTEIN SEQUENCE</scope>
</reference>
<protein>
    <recommendedName>
        <fullName>Globin, cuticular isoform</fullName>
    </recommendedName>
</protein>
<accession>P51536</accession>
<comment type="subcellular location">
    <subcellularLocation>
        <location evidence="1">Secreted</location>
        <location evidence="1">Extracellular space</location>
    </subcellularLocation>
</comment>
<comment type="tissue specificity">
    <text>Expressed only by adult nematodes in the gut.</text>
</comment>
<comment type="miscellaneous">
    <text>The globins of the nematode parasite N.brasiliensis have oxygen affinities 100-fold higher than the rodent host's hemoglobins. Two isoforms are found, one located in the cuticle, and the other in the body of the nematode.</text>
</comment>
<comment type="similarity">
    <text evidence="2">Belongs to the globin family.</text>
</comment>